<accession>A5VDT7</accession>
<reference key="1">
    <citation type="journal article" date="2010" name="J. Bacteriol.">
        <title>Genome sequence of the dioxin-mineralizing bacterium Sphingomonas wittichii RW1.</title>
        <authorList>
            <person name="Miller T.R."/>
            <person name="Delcher A.L."/>
            <person name="Salzberg S.L."/>
            <person name="Saunders E."/>
            <person name="Detter J.C."/>
            <person name="Halden R.U."/>
        </authorList>
    </citation>
    <scope>NUCLEOTIDE SEQUENCE [LARGE SCALE GENOMIC DNA]</scope>
    <source>
        <strain>DSM 6014 / CCUG 31198 / JCM 15750 / NBRC 105917 / EY 4224 / RW1</strain>
    </source>
</reference>
<comment type="function">
    <text evidence="1">One of the essential components for the initiation of protein synthesis. Stabilizes the binding of IF-2 and IF-3 on the 30S subunit to which N-formylmethionyl-tRNA(fMet) subsequently binds. Helps modulate mRNA selection, yielding the 30S pre-initiation complex (PIC). Upon addition of the 50S ribosomal subunit IF-1, IF-2 and IF-3 are released leaving the mature 70S translation initiation complex.</text>
</comment>
<comment type="subunit">
    <text evidence="1">Component of the 30S ribosomal translation pre-initiation complex which assembles on the 30S ribosome in the order IF-2 and IF-3, IF-1 and N-formylmethionyl-tRNA(fMet); mRNA recruitment can occur at any time during PIC assembly.</text>
</comment>
<comment type="subcellular location">
    <subcellularLocation>
        <location evidence="1">Cytoplasm</location>
    </subcellularLocation>
</comment>
<comment type="similarity">
    <text evidence="1">Belongs to the IF-1 family.</text>
</comment>
<protein>
    <recommendedName>
        <fullName evidence="1">Translation initiation factor IF-1</fullName>
    </recommendedName>
</protein>
<keyword id="KW-0963">Cytoplasm</keyword>
<keyword id="KW-0396">Initiation factor</keyword>
<keyword id="KW-0648">Protein biosynthesis</keyword>
<keyword id="KW-1185">Reference proteome</keyword>
<keyword id="KW-0694">RNA-binding</keyword>
<keyword id="KW-0699">rRNA-binding</keyword>
<feature type="chain" id="PRO_0000338928" description="Translation initiation factor IF-1">
    <location>
        <begin position="1"/>
        <end position="72"/>
    </location>
</feature>
<feature type="domain" description="S1-like" evidence="1">
    <location>
        <begin position="1"/>
        <end position="72"/>
    </location>
</feature>
<sequence length="72" mass="8411">MAKEELLEMRGQVVELLPNAMFRVKLENDHEILGHTAGKMRKNRIRVLVGDEVLVELTPYDLTKGRITYRFK</sequence>
<dbReference type="EMBL" id="CP000699">
    <property type="protein sequence ID" value="ABQ70453.1"/>
    <property type="molecule type" value="Genomic_DNA"/>
</dbReference>
<dbReference type="SMR" id="A5VDT7"/>
<dbReference type="STRING" id="392499.Swit_4110"/>
<dbReference type="PaxDb" id="392499-Swit_4110"/>
<dbReference type="KEGG" id="swi:Swit_4110"/>
<dbReference type="eggNOG" id="COG0361">
    <property type="taxonomic scope" value="Bacteria"/>
</dbReference>
<dbReference type="HOGENOM" id="CLU_151267_1_0_5"/>
<dbReference type="OrthoDB" id="9803250at2"/>
<dbReference type="Proteomes" id="UP000001989">
    <property type="component" value="Chromosome"/>
</dbReference>
<dbReference type="GO" id="GO:0005829">
    <property type="term" value="C:cytosol"/>
    <property type="evidence" value="ECO:0007669"/>
    <property type="project" value="TreeGrafter"/>
</dbReference>
<dbReference type="GO" id="GO:0043022">
    <property type="term" value="F:ribosome binding"/>
    <property type="evidence" value="ECO:0007669"/>
    <property type="project" value="UniProtKB-UniRule"/>
</dbReference>
<dbReference type="GO" id="GO:0019843">
    <property type="term" value="F:rRNA binding"/>
    <property type="evidence" value="ECO:0007669"/>
    <property type="project" value="UniProtKB-UniRule"/>
</dbReference>
<dbReference type="GO" id="GO:0003743">
    <property type="term" value="F:translation initiation factor activity"/>
    <property type="evidence" value="ECO:0007669"/>
    <property type="project" value="UniProtKB-UniRule"/>
</dbReference>
<dbReference type="CDD" id="cd04451">
    <property type="entry name" value="S1_IF1"/>
    <property type="match status" value="1"/>
</dbReference>
<dbReference type="FunFam" id="2.40.50.140:FF:000002">
    <property type="entry name" value="Translation initiation factor IF-1"/>
    <property type="match status" value="1"/>
</dbReference>
<dbReference type="Gene3D" id="2.40.50.140">
    <property type="entry name" value="Nucleic acid-binding proteins"/>
    <property type="match status" value="1"/>
</dbReference>
<dbReference type="HAMAP" id="MF_00075">
    <property type="entry name" value="IF_1"/>
    <property type="match status" value="1"/>
</dbReference>
<dbReference type="InterPro" id="IPR012340">
    <property type="entry name" value="NA-bd_OB-fold"/>
</dbReference>
<dbReference type="InterPro" id="IPR006196">
    <property type="entry name" value="RNA-binding_domain_S1_IF1"/>
</dbReference>
<dbReference type="InterPro" id="IPR003029">
    <property type="entry name" value="S1_domain"/>
</dbReference>
<dbReference type="InterPro" id="IPR004368">
    <property type="entry name" value="TIF_IF1"/>
</dbReference>
<dbReference type="NCBIfam" id="TIGR00008">
    <property type="entry name" value="infA"/>
    <property type="match status" value="1"/>
</dbReference>
<dbReference type="PANTHER" id="PTHR33370">
    <property type="entry name" value="TRANSLATION INITIATION FACTOR IF-1, CHLOROPLASTIC"/>
    <property type="match status" value="1"/>
</dbReference>
<dbReference type="PANTHER" id="PTHR33370:SF1">
    <property type="entry name" value="TRANSLATION INITIATION FACTOR IF-1, CHLOROPLASTIC"/>
    <property type="match status" value="1"/>
</dbReference>
<dbReference type="Pfam" id="PF01176">
    <property type="entry name" value="eIF-1a"/>
    <property type="match status" value="1"/>
</dbReference>
<dbReference type="SMART" id="SM00316">
    <property type="entry name" value="S1"/>
    <property type="match status" value="1"/>
</dbReference>
<dbReference type="SUPFAM" id="SSF50249">
    <property type="entry name" value="Nucleic acid-binding proteins"/>
    <property type="match status" value="1"/>
</dbReference>
<dbReference type="PROSITE" id="PS50832">
    <property type="entry name" value="S1_IF1_TYPE"/>
    <property type="match status" value="1"/>
</dbReference>
<name>IF1_RHIWR</name>
<evidence type="ECO:0000255" key="1">
    <source>
        <dbReference type="HAMAP-Rule" id="MF_00075"/>
    </source>
</evidence>
<proteinExistence type="inferred from homology"/>
<gene>
    <name evidence="1" type="primary">infA</name>
    <name type="ordered locus">Swit_4110</name>
</gene>
<organism>
    <name type="scientific">Rhizorhabdus wittichii (strain DSM 6014 / CCUG 31198 / JCM 15750 / NBRC 105917 / EY 4224 / RW1)</name>
    <name type="common">Sphingomonas wittichii</name>
    <dbReference type="NCBI Taxonomy" id="392499"/>
    <lineage>
        <taxon>Bacteria</taxon>
        <taxon>Pseudomonadati</taxon>
        <taxon>Pseudomonadota</taxon>
        <taxon>Alphaproteobacteria</taxon>
        <taxon>Sphingomonadales</taxon>
        <taxon>Sphingomonadaceae</taxon>
        <taxon>Rhizorhabdus</taxon>
    </lineage>
</organism>